<geneLocation type="chloroplast"/>
<evidence type="ECO:0000255" key="1">
    <source>
        <dbReference type="HAMAP-Rule" id="MF_00293"/>
    </source>
</evidence>
<gene>
    <name evidence="1" type="primary">psbN</name>
</gene>
<sequence>METATLVAISISGLLVSFTGYALYTAFGQPSQQLRDPFEEHGD</sequence>
<proteinExistence type="inferred from homology"/>
<protein>
    <recommendedName>
        <fullName evidence="1">Protein PsbN</fullName>
    </recommendedName>
</protein>
<dbReference type="EMBL" id="EU002431">
    <property type="protein sequence ID" value="ABV65564.1"/>
    <property type="molecule type" value="Genomic_DNA"/>
</dbReference>
<dbReference type="EMBL" id="EU117376">
    <property type="protein sequence ID" value="ABV66182.1"/>
    <property type="molecule type" value="Genomic_DNA"/>
</dbReference>
<dbReference type="RefSeq" id="YP_001718465.1">
    <property type="nucleotide sequence ID" value="NC_010433.1"/>
</dbReference>
<dbReference type="SMR" id="A9XVQ4"/>
<dbReference type="GeneID" id="6000069"/>
<dbReference type="KEGG" id="mesc:6000069"/>
<dbReference type="OrthoDB" id="1860403at2759"/>
<dbReference type="GO" id="GO:0009535">
    <property type="term" value="C:chloroplast thylakoid membrane"/>
    <property type="evidence" value="ECO:0007669"/>
    <property type="project" value="UniProtKB-SubCell"/>
</dbReference>
<dbReference type="GO" id="GO:0015979">
    <property type="term" value="P:photosynthesis"/>
    <property type="evidence" value="ECO:0007669"/>
    <property type="project" value="InterPro"/>
</dbReference>
<dbReference type="HAMAP" id="MF_00293">
    <property type="entry name" value="PSII_PsbN"/>
    <property type="match status" value="1"/>
</dbReference>
<dbReference type="InterPro" id="IPR003398">
    <property type="entry name" value="PSII_PsbN"/>
</dbReference>
<dbReference type="PANTHER" id="PTHR35326">
    <property type="entry name" value="PROTEIN PSBN"/>
    <property type="match status" value="1"/>
</dbReference>
<dbReference type="PANTHER" id="PTHR35326:SF3">
    <property type="entry name" value="PROTEIN PSBN"/>
    <property type="match status" value="1"/>
</dbReference>
<dbReference type="Pfam" id="PF02468">
    <property type="entry name" value="PsbN"/>
    <property type="match status" value="1"/>
</dbReference>
<name>PSBN_MANES</name>
<reference key="1">
    <citation type="submission" date="2007-06" db="EMBL/GenBank/DDBJ databases">
        <title>Phylogeny and diversification of the rosids inferred from nuclear and plastid genes.</title>
        <authorList>
            <person name="Wang H."/>
            <person name="Moore M.J."/>
            <person name="Bell C.D."/>
            <person name="Soltis P.S."/>
            <person name="Soltis D.E."/>
        </authorList>
    </citation>
    <scope>NUCLEOTIDE SEQUENCE [GENOMIC DNA]</scope>
</reference>
<reference key="2">
    <citation type="journal article" date="2008" name="Theor. Appl. Genet.">
        <title>The complete nucleotide sequence of the cassava (Manihot esculenta) chloroplast genome and the evolution of atpF in Malpighiales: RNA editing and multiple losses of a group II intron.</title>
        <authorList>
            <person name="Daniell H."/>
            <person name="Wurdack K.J."/>
            <person name="Kanagaraj A."/>
            <person name="Lee S.-B."/>
            <person name="Saski C."/>
            <person name="Jansen R.K."/>
        </authorList>
    </citation>
    <scope>NUCLEOTIDE SEQUENCE [LARGE SCALE GENOMIC DNA]</scope>
    <source>
        <strain>cv. TME3</strain>
    </source>
</reference>
<keyword id="KW-0150">Chloroplast</keyword>
<keyword id="KW-0472">Membrane</keyword>
<keyword id="KW-0934">Plastid</keyword>
<keyword id="KW-0793">Thylakoid</keyword>
<keyword id="KW-0812">Transmembrane</keyword>
<keyword id="KW-1133">Transmembrane helix</keyword>
<organism>
    <name type="scientific">Manihot esculenta</name>
    <name type="common">Cassava</name>
    <name type="synonym">Jatropha manihot</name>
    <dbReference type="NCBI Taxonomy" id="3983"/>
    <lineage>
        <taxon>Eukaryota</taxon>
        <taxon>Viridiplantae</taxon>
        <taxon>Streptophyta</taxon>
        <taxon>Embryophyta</taxon>
        <taxon>Tracheophyta</taxon>
        <taxon>Spermatophyta</taxon>
        <taxon>Magnoliopsida</taxon>
        <taxon>eudicotyledons</taxon>
        <taxon>Gunneridae</taxon>
        <taxon>Pentapetalae</taxon>
        <taxon>rosids</taxon>
        <taxon>fabids</taxon>
        <taxon>Malpighiales</taxon>
        <taxon>Euphorbiaceae</taxon>
        <taxon>Crotonoideae</taxon>
        <taxon>Manihoteae</taxon>
        <taxon>Manihot</taxon>
    </lineage>
</organism>
<feature type="chain" id="PRO_0000362203" description="Protein PsbN">
    <location>
        <begin position="1"/>
        <end position="43"/>
    </location>
</feature>
<feature type="transmembrane region" description="Helical" evidence="1">
    <location>
        <begin position="5"/>
        <end position="27"/>
    </location>
</feature>
<comment type="function">
    <text evidence="1">May play a role in photosystem I and II biogenesis.</text>
</comment>
<comment type="subcellular location">
    <subcellularLocation>
        <location evidence="1">Plastid</location>
        <location evidence="1">Chloroplast thylakoid membrane</location>
        <topology evidence="1">Single-pass membrane protein</topology>
    </subcellularLocation>
</comment>
<comment type="similarity">
    <text evidence="1">Belongs to the PsbN family.</text>
</comment>
<comment type="caution">
    <text evidence="1">Originally thought to be a component of PSII; based on experiments in Synechocystis, N.tabacum and barley, and its absence from PSII in T.elongatus and T.vulcanus, this is probably not true.</text>
</comment>
<accession>A9XVQ4</accession>